<sequence>MRLCDRDIEAWLDEGRLSITPRPPVERINGATVDVRLGNKFRTFRGHTAAFIDLSGPKDEVSAALDRVMSDEIVLPDGEAFYLHPGELALAVTFESVTLPPDLVGWLDGRSSLARLGLMVHVTAHRIDPGWSGCIVLEFYNSGKLPLALRPGMLIGALSFEPLSGPAARPYNRRQDAKYRDQQGAVASRIDKD</sequence>
<gene>
    <name evidence="1" type="primary">dcd</name>
    <name type="ordered locus">SeD_A2462</name>
</gene>
<organism>
    <name type="scientific">Salmonella dublin (strain CT_02021853)</name>
    <dbReference type="NCBI Taxonomy" id="439851"/>
    <lineage>
        <taxon>Bacteria</taxon>
        <taxon>Pseudomonadati</taxon>
        <taxon>Pseudomonadota</taxon>
        <taxon>Gammaproteobacteria</taxon>
        <taxon>Enterobacterales</taxon>
        <taxon>Enterobacteriaceae</taxon>
        <taxon>Salmonella</taxon>
    </lineage>
</organism>
<evidence type="ECO:0000255" key="1">
    <source>
        <dbReference type="HAMAP-Rule" id="MF_00146"/>
    </source>
</evidence>
<evidence type="ECO:0000256" key="2">
    <source>
        <dbReference type="SAM" id="MobiDB-lite"/>
    </source>
</evidence>
<keyword id="KW-0378">Hydrolase</keyword>
<keyword id="KW-0546">Nucleotide metabolism</keyword>
<keyword id="KW-0547">Nucleotide-binding</keyword>
<protein>
    <recommendedName>
        <fullName evidence="1">dCTP deaminase</fullName>
        <ecNumber evidence="1">3.5.4.13</ecNumber>
    </recommendedName>
    <alternativeName>
        <fullName evidence="1">Deoxycytidine triphosphate deaminase</fullName>
    </alternativeName>
</protein>
<comment type="function">
    <text evidence="1">Catalyzes the deamination of dCTP to dUTP.</text>
</comment>
<comment type="catalytic activity">
    <reaction evidence="1">
        <text>dCTP + H2O + H(+) = dUTP + NH4(+)</text>
        <dbReference type="Rhea" id="RHEA:22680"/>
        <dbReference type="ChEBI" id="CHEBI:15377"/>
        <dbReference type="ChEBI" id="CHEBI:15378"/>
        <dbReference type="ChEBI" id="CHEBI:28938"/>
        <dbReference type="ChEBI" id="CHEBI:61481"/>
        <dbReference type="ChEBI" id="CHEBI:61555"/>
        <dbReference type="EC" id="3.5.4.13"/>
    </reaction>
</comment>
<comment type="pathway">
    <text evidence="1">Pyrimidine metabolism; dUMP biosynthesis; dUMP from dCTP (dUTP route): step 1/2.</text>
</comment>
<comment type="subunit">
    <text evidence="1">Homotrimer.</text>
</comment>
<comment type="similarity">
    <text evidence="1">Belongs to the dCTP deaminase family.</text>
</comment>
<reference key="1">
    <citation type="journal article" date="2011" name="J. Bacteriol.">
        <title>Comparative genomics of 28 Salmonella enterica isolates: evidence for CRISPR-mediated adaptive sublineage evolution.</title>
        <authorList>
            <person name="Fricke W.F."/>
            <person name="Mammel M.K."/>
            <person name="McDermott P.F."/>
            <person name="Tartera C."/>
            <person name="White D.G."/>
            <person name="Leclerc J.E."/>
            <person name="Ravel J."/>
            <person name="Cebula T.A."/>
        </authorList>
    </citation>
    <scope>NUCLEOTIDE SEQUENCE [LARGE SCALE GENOMIC DNA]</scope>
    <source>
        <strain>CT_02021853</strain>
    </source>
</reference>
<dbReference type="EC" id="3.5.4.13" evidence="1"/>
<dbReference type="EMBL" id="CP001144">
    <property type="protein sequence ID" value="ACH76894.1"/>
    <property type="molecule type" value="Genomic_DNA"/>
</dbReference>
<dbReference type="RefSeq" id="WP_001234783.1">
    <property type="nucleotide sequence ID" value="NC_011205.1"/>
</dbReference>
<dbReference type="SMR" id="B5FMU0"/>
<dbReference type="KEGG" id="sed:SeD_A2462"/>
<dbReference type="HOGENOM" id="CLU_087476_2_0_6"/>
<dbReference type="UniPathway" id="UPA00610">
    <property type="reaction ID" value="UER00665"/>
</dbReference>
<dbReference type="Proteomes" id="UP000008322">
    <property type="component" value="Chromosome"/>
</dbReference>
<dbReference type="GO" id="GO:0008829">
    <property type="term" value="F:dCTP deaminase activity"/>
    <property type="evidence" value="ECO:0007669"/>
    <property type="project" value="UniProtKB-UniRule"/>
</dbReference>
<dbReference type="GO" id="GO:0000166">
    <property type="term" value="F:nucleotide binding"/>
    <property type="evidence" value="ECO:0007669"/>
    <property type="project" value="UniProtKB-KW"/>
</dbReference>
<dbReference type="GO" id="GO:0006226">
    <property type="term" value="P:dUMP biosynthetic process"/>
    <property type="evidence" value="ECO:0007669"/>
    <property type="project" value="UniProtKB-UniPathway"/>
</dbReference>
<dbReference type="GO" id="GO:0006229">
    <property type="term" value="P:dUTP biosynthetic process"/>
    <property type="evidence" value="ECO:0007669"/>
    <property type="project" value="UniProtKB-UniRule"/>
</dbReference>
<dbReference type="GO" id="GO:0015949">
    <property type="term" value="P:nucleobase-containing small molecule interconversion"/>
    <property type="evidence" value="ECO:0007669"/>
    <property type="project" value="TreeGrafter"/>
</dbReference>
<dbReference type="CDD" id="cd07557">
    <property type="entry name" value="trimeric_dUTPase"/>
    <property type="match status" value="1"/>
</dbReference>
<dbReference type="FunFam" id="2.70.40.10:FF:000003">
    <property type="entry name" value="dCTP deaminase"/>
    <property type="match status" value="1"/>
</dbReference>
<dbReference type="Gene3D" id="2.70.40.10">
    <property type="match status" value="1"/>
</dbReference>
<dbReference type="HAMAP" id="MF_00146">
    <property type="entry name" value="dCTP_deaminase"/>
    <property type="match status" value="1"/>
</dbReference>
<dbReference type="InterPro" id="IPR011962">
    <property type="entry name" value="dCTP_deaminase"/>
</dbReference>
<dbReference type="InterPro" id="IPR036157">
    <property type="entry name" value="dUTPase-like_sf"/>
</dbReference>
<dbReference type="InterPro" id="IPR033704">
    <property type="entry name" value="dUTPase_trimeric"/>
</dbReference>
<dbReference type="NCBIfam" id="TIGR02274">
    <property type="entry name" value="dCTP_deam"/>
    <property type="match status" value="1"/>
</dbReference>
<dbReference type="PANTHER" id="PTHR42680">
    <property type="entry name" value="DCTP DEAMINASE"/>
    <property type="match status" value="1"/>
</dbReference>
<dbReference type="PANTHER" id="PTHR42680:SF3">
    <property type="entry name" value="DCTP DEAMINASE"/>
    <property type="match status" value="1"/>
</dbReference>
<dbReference type="Pfam" id="PF22769">
    <property type="entry name" value="DCD"/>
    <property type="match status" value="1"/>
</dbReference>
<dbReference type="SUPFAM" id="SSF51283">
    <property type="entry name" value="dUTPase-like"/>
    <property type="match status" value="1"/>
</dbReference>
<feature type="chain" id="PRO_1000096447" description="dCTP deaminase">
    <location>
        <begin position="1"/>
        <end position="193"/>
    </location>
</feature>
<feature type="region of interest" description="Disordered" evidence="2">
    <location>
        <begin position="169"/>
        <end position="193"/>
    </location>
</feature>
<feature type="active site" description="Proton donor/acceptor" evidence="1">
    <location>
        <position position="138"/>
    </location>
</feature>
<feature type="binding site" evidence="1">
    <location>
        <begin position="110"/>
        <end position="115"/>
    </location>
    <ligand>
        <name>dCTP</name>
        <dbReference type="ChEBI" id="CHEBI:61481"/>
    </ligand>
</feature>
<feature type="binding site" evidence="1">
    <location>
        <position position="128"/>
    </location>
    <ligand>
        <name>dCTP</name>
        <dbReference type="ChEBI" id="CHEBI:61481"/>
    </ligand>
</feature>
<feature type="binding site" evidence="1">
    <location>
        <begin position="136"/>
        <end position="138"/>
    </location>
    <ligand>
        <name>dCTP</name>
        <dbReference type="ChEBI" id="CHEBI:61481"/>
    </ligand>
</feature>
<feature type="binding site" evidence="1">
    <location>
        <position position="171"/>
    </location>
    <ligand>
        <name>dCTP</name>
        <dbReference type="ChEBI" id="CHEBI:61481"/>
    </ligand>
</feature>
<feature type="binding site" evidence="1">
    <location>
        <position position="178"/>
    </location>
    <ligand>
        <name>dCTP</name>
        <dbReference type="ChEBI" id="CHEBI:61481"/>
    </ligand>
</feature>
<feature type="binding site" evidence="1">
    <location>
        <position position="182"/>
    </location>
    <ligand>
        <name>dCTP</name>
        <dbReference type="ChEBI" id="CHEBI:61481"/>
    </ligand>
</feature>
<name>DCD_SALDC</name>
<proteinExistence type="inferred from homology"/>
<accession>B5FMU0</accession>